<name>SYE2_NEOSM</name>
<organism>
    <name type="scientific">Neorickettsia sennetsu (strain ATCC VR-367 / Miyayama)</name>
    <name type="common">Ehrlichia sennetsu</name>
    <dbReference type="NCBI Taxonomy" id="222891"/>
    <lineage>
        <taxon>Bacteria</taxon>
        <taxon>Pseudomonadati</taxon>
        <taxon>Pseudomonadota</taxon>
        <taxon>Alphaproteobacteria</taxon>
        <taxon>Rickettsiales</taxon>
        <taxon>Anaplasmataceae</taxon>
        <taxon>Neorickettsia</taxon>
    </lineage>
</organism>
<protein>
    <recommendedName>
        <fullName evidence="1">Glutamate--tRNA ligase 2</fullName>
        <ecNumber evidence="1">6.1.1.17</ecNumber>
    </recommendedName>
    <alternativeName>
        <fullName evidence="1">Glutamyl-tRNA synthetase 2</fullName>
        <shortName evidence="1">GluRS 2</shortName>
    </alternativeName>
</protein>
<evidence type="ECO:0000255" key="1">
    <source>
        <dbReference type="HAMAP-Rule" id="MF_00022"/>
    </source>
</evidence>
<feature type="chain" id="PRO_0000237375" description="Glutamate--tRNA ligase 2">
    <location>
        <begin position="1"/>
        <end position="409"/>
    </location>
</feature>
<feature type="short sequence motif" description="'HIGH' region" evidence="1">
    <location>
        <begin position="9"/>
        <end position="19"/>
    </location>
</feature>
<feature type="short sequence motif" description="'KMSKS' region" evidence="1">
    <location>
        <begin position="198"/>
        <end position="202"/>
    </location>
</feature>
<feature type="binding site" evidence="1">
    <location>
        <position position="201"/>
    </location>
    <ligand>
        <name>ATP</name>
        <dbReference type="ChEBI" id="CHEBI:30616"/>
    </ligand>
</feature>
<accession>Q2GD33</accession>
<proteinExistence type="inferred from homology"/>
<sequence length="409" mass="46229">MDVVTRFAPSPTGNLHIGGLRTAIFNFLYARRHGGKFLLRIEDTDLARSNTAYLESILQALKWLSLSYDELVYQSVNVNRHREVALELLNRGKAYHDNGAVRLKVNHDETVKFSDLILGEISADGDSINDVVILRSDGSPTYMLAVVVDDHDMGITHIIRGSDHITNTFAQKLIYEGMGWSLPDFAHIPLIHNTHGAKLSKRDGAVDVIDYRTAGILPEAMFNYLLRLGWSHGDKEIFSIQEAIDLFDITAVGKSPARFDREKLYSLNSYYISGLPLERIASEVRSLVEEKIIVSYSAFIAFVELFRKKCSSIVELKDNLQFCWCTDSCLEVDRLLLQEVLKLLENTDWGPSLQQILKEYISLSGFSAKEVYTNLRMALIGQEHSPSVVEIMQIFGKDVVLKKLRNSLK</sequence>
<gene>
    <name evidence="1" type="primary">gltX2</name>
    <name type="ordered locus">NSE_0737</name>
</gene>
<reference key="1">
    <citation type="journal article" date="2006" name="PLoS Genet.">
        <title>Comparative genomics of emerging human ehrlichiosis agents.</title>
        <authorList>
            <person name="Dunning Hotopp J.C."/>
            <person name="Lin M."/>
            <person name="Madupu R."/>
            <person name="Crabtree J."/>
            <person name="Angiuoli S.V."/>
            <person name="Eisen J.A."/>
            <person name="Seshadri R."/>
            <person name="Ren Q."/>
            <person name="Wu M."/>
            <person name="Utterback T.R."/>
            <person name="Smith S."/>
            <person name="Lewis M."/>
            <person name="Khouri H."/>
            <person name="Zhang C."/>
            <person name="Niu H."/>
            <person name="Lin Q."/>
            <person name="Ohashi N."/>
            <person name="Zhi N."/>
            <person name="Nelson W.C."/>
            <person name="Brinkac L.M."/>
            <person name="Dodson R.J."/>
            <person name="Rosovitz M.J."/>
            <person name="Sundaram J.P."/>
            <person name="Daugherty S.C."/>
            <person name="Davidsen T."/>
            <person name="Durkin A.S."/>
            <person name="Gwinn M.L."/>
            <person name="Haft D.H."/>
            <person name="Selengut J.D."/>
            <person name="Sullivan S.A."/>
            <person name="Zafar N."/>
            <person name="Zhou L."/>
            <person name="Benahmed F."/>
            <person name="Forberger H."/>
            <person name="Halpin R."/>
            <person name="Mulligan S."/>
            <person name="Robinson J."/>
            <person name="White O."/>
            <person name="Rikihisa Y."/>
            <person name="Tettelin H."/>
        </authorList>
    </citation>
    <scope>NUCLEOTIDE SEQUENCE [LARGE SCALE GENOMIC DNA]</scope>
    <source>
        <strain>ATCC VR-367 / Miyayama</strain>
    </source>
</reference>
<comment type="function">
    <text evidence="1">Catalyzes the attachment of glutamate to tRNA(Glu) in a two-step reaction: glutamate is first activated by ATP to form Glu-AMP and then transferred to the acceptor end of tRNA(Glu).</text>
</comment>
<comment type="catalytic activity">
    <reaction evidence="1">
        <text>tRNA(Glu) + L-glutamate + ATP = L-glutamyl-tRNA(Glu) + AMP + diphosphate</text>
        <dbReference type="Rhea" id="RHEA:23540"/>
        <dbReference type="Rhea" id="RHEA-COMP:9663"/>
        <dbReference type="Rhea" id="RHEA-COMP:9680"/>
        <dbReference type="ChEBI" id="CHEBI:29985"/>
        <dbReference type="ChEBI" id="CHEBI:30616"/>
        <dbReference type="ChEBI" id="CHEBI:33019"/>
        <dbReference type="ChEBI" id="CHEBI:78442"/>
        <dbReference type="ChEBI" id="CHEBI:78520"/>
        <dbReference type="ChEBI" id="CHEBI:456215"/>
        <dbReference type="EC" id="6.1.1.17"/>
    </reaction>
</comment>
<comment type="subunit">
    <text evidence="1">Monomer.</text>
</comment>
<comment type="subcellular location">
    <subcellularLocation>
        <location evidence="1">Cytoplasm</location>
    </subcellularLocation>
</comment>
<comment type="similarity">
    <text evidence="1">Belongs to the class-I aminoacyl-tRNA synthetase family. Glutamate--tRNA ligase type 1 subfamily.</text>
</comment>
<keyword id="KW-0030">Aminoacyl-tRNA synthetase</keyword>
<keyword id="KW-0067">ATP-binding</keyword>
<keyword id="KW-0963">Cytoplasm</keyword>
<keyword id="KW-0436">Ligase</keyword>
<keyword id="KW-0547">Nucleotide-binding</keyword>
<keyword id="KW-0648">Protein biosynthesis</keyword>
<dbReference type="EC" id="6.1.1.17" evidence="1"/>
<dbReference type="EMBL" id="CP000237">
    <property type="protein sequence ID" value="ABD46317.1"/>
    <property type="molecule type" value="Genomic_DNA"/>
</dbReference>
<dbReference type="RefSeq" id="WP_011452119.1">
    <property type="nucleotide sequence ID" value="NC_007798.1"/>
</dbReference>
<dbReference type="SMR" id="Q2GD33"/>
<dbReference type="STRING" id="222891.NSE_0737"/>
<dbReference type="KEGG" id="nse:NSE_0737"/>
<dbReference type="eggNOG" id="COG0008">
    <property type="taxonomic scope" value="Bacteria"/>
</dbReference>
<dbReference type="HOGENOM" id="CLU_015768_6_3_5"/>
<dbReference type="OrthoDB" id="9807503at2"/>
<dbReference type="Proteomes" id="UP000001942">
    <property type="component" value="Chromosome"/>
</dbReference>
<dbReference type="GO" id="GO:0005829">
    <property type="term" value="C:cytosol"/>
    <property type="evidence" value="ECO:0007669"/>
    <property type="project" value="TreeGrafter"/>
</dbReference>
<dbReference type="GO" id="GO:0005524">
    <property type="term" value="F:ATP binding"/>
    <property type="evidence" value="ECO:0007669"/>
    <property type="project" value="UniProtKB-UniRule"/>
</dbReference>
<dbReference type="GO" id="GO:0004818">
    <property type="term" value="F:glutamate-tRNA ligase activity"/>
    <property type="evidence" value="ECO:0007669"/>
    <property type="project" value="UniProtKB-UniRule"/>
</dbReference>
<dbReference type="GO" id="GO:0000049">
    <property type="term" value="F:tRNA binding"/>
    <property type="evidence" value="ECO:0007669"/>
    <property type="project" value="InterPro"/>
</dbReference>
<dbReference type="GO" id="GO:0008270">
    <property type="term" value="F:zinc ion binding"/>
    <property type="evidence" value="ECO:0007669"/>
    <property type="project" value="InterPro"/>
</dbReference>
<dbReference type="GO" id="GO:0006424">
    <property type="term" value="P:glutamyl-tRNA aminoacylation"/>
    <property type="evidence" value="ECO:0007669"/>
    <property type="project" value="UniProtKB-UniRule"/>
</dbReference>
<dbReference type="CDD" id="cd00808">
    <property type="entry name" value="GluRS_core"/>
    <property type="match status" value="1"/>
</dbReference>
<dbReference type="Gene3D" id="1.10.10.350">
    <property type="match status" value="1"/>
</dbReference>
<dbReference type="Gene3D" id="3.40.50.620">
    <property type="entry name" value="HUPs"/>
    <property type="match status" value="2"/>
</dbReference>
<dbReference type="HAMAP" id="MF_00022">
    <property type="entry name" value="Glu_tRNA_synth_type1"/>
    <property type="match status" value="1"/>
</dbReference>
<dbReference type="InterPro" id="IPR045462">
    <property type="entry name" value="aa-tRNA-synth_I_cd-bd"/>
</dbReference>
<dbReference type="InterPro" id="IPR020751">
    <property type="entry name" value="aa-tRNA-synth_I_codon-bd_sub2"/>
</dbReference>
<dbReference type="InterPro" id="IPR001412">
    <property type="entry name" value="aa-tRNA-synth_I_CS"/>
</dbReference>
<dbReference type="InterPro" id="IPR008925">
    <property type="entry name" value="aa_tRNA-synth_I_cd-bd_sf"/>
</dbReference>
<dbReference type="InterPro" id="IPR004527">
    <property type="entry name" value="Glu-tRNA-ligase_bac/mito"/>
</dbReference>
<dbReference type="InterPro" id="IPR000924">
    <property type="entry name" value="Glu/Gln-tRNA-synth"/>
</dbReference>
<dbReference type="InterPro" id="IPR020058">
    <property type="entry name" value="Glu/Gln-tRNA-synth_Ib_cat-dom"/>
</dbReference>
<dbReference type="InterPro" id="IPR049940">
    <property type="entry name" value="GluQ/Sye"/>
</dbReference>
<dbReference type="InterPro" id="IPR033910">
    <property type="entry name" value="GluRS_core"/>
</dbReference>
<dbReference type="InterPro" id="IPR014729">
    <property type="entry name" value="Rossmann-like_a/b/a_fold"/>
</dbReference>
<dbReference type="PANTHER" id="PTHR43311">
    <property type="entry name" value="GLUTAMATE--TRNA LIGASE"/>
    <property type="match status" value="1"/>
</dbReference>
<dbReference type="PANTHER" id="PTHR43311:SF2">
    <property type="entry name" value="GLUTAMATE--TRNA LIGASE, MITOCHONDRIAL-RELATED"/>
    <property type="match status" value="1"/>
</dbReference>
<dbReference type="Pfam" id="PF19269">
    <property type="entry name" value="Anticodon_2"/>
    <property type="match status" value="1"/>
</dbReference>
<dbReference type="Pfam" id="PF00749">
    <property type="entry name" value="tRNA-synt_1c"/>
    <property type="match status" value="2"/>
</dbReference>
<dbReference type="PRINTS" id="PR00987">
    <property type="entry name" value="TRNASYNTHGLU"/>
</dbReference>
<dbReference type="SUPFAM" id="SSF48163">
    <property type="entry name" value="An anticodon-binding domain of class I aminoacyl-tRNA synthetases"/>
    <property type="match status" value="1"/>
</dbReference>
<dbReference type="SUPFAM" id="SSF52374">
    <property type="entry name" value="Nucleotidylyl transferase"/>
    <property type="match status" value="1"/>
</dbReference>
<dbReference type="PROSITE" id="PS00178">
    <property type="entry name" value="AA_TRNA_LIGASE_I"/>
    <property type="match status" value="1"/>
</dbReference>